<name>HSP81_ORYSJ</name>
<comment type="function">
    <text evidence="1">Molecular chaperone that promotes the maturation, structural maintenance and proper regulation of specific target proteins involved for instance in cell cycle control and signal transduction. Undergoes a functional cycle that is linked to its ATPase activity. This cycle probably induces conformational changes in the client proteins, thereby causing their activation. Interacts dynamically with various co-chaperones that modulate its substrate recognition, ATPase cycle and chaperone function (By similarity).</text>
</comment>
<comment type="subunit">
    <text evidence="1">Homodimer.</text>
</comment>
<comment type="subcellular location">
    <subcellularLocation>
        <location evidence="3">Cytoplasm</location>
    </subcellularLocation>
</comment>
<comment type="domain">
    <text evidence="1">The TPR repeat-binding motif mediates interaction with TPR repeat-containing proteins.</text>
</comment>
<comment type="similarity">
    <text evidence="3">Belongs to the heat shock protein 90 family.</text>
</comment>
<comment type="sequence caution" evidence="3">
    <conflict type="erroneous gene model prediction">
        <sequence resource="EMBL-CDS" id="BAF24073"/>
    </conflict>
</comment>
<feature type="chain" id="PRO_0000062951" description="Heat shock protein 81-1">
    <location>
        <begin position="1"/>
        <end position="699"/>
    </location>
</feature>
<feature type="region of interest" description="Disordered" evidence="2">
    <location>
        <begin position="215"/>
        <end position="250"/>
    </location>
</feature>
<feature type="region of interest" description="Disordered" evidence="2">
    <location>
        <begin position="672"/>
        <end position="699"/>
    </location>
</feature>
<feature type="short sequence motif" description="TPR repeat-binding">
    <location>
        <begin position="695"/>
        <end position="699"/>
    </location>
</feature>
<feature type="compositionally biased region" description="Basic and acidic residues" evidence="2">
    <location>
        <begin position="228"/>
        <end position="237"/>
    </location>
</feature>
<feature type="compositionally biased region" description="Acidic residues" evidence="2">
    <location>
        <begin position="672"/>
        <end position="690"/>
    </location>
</feature>
<feature type="binding site" evidence="1">
    <location>
        <position position="39"/>
    </location>
    <ligand>
        <name>ATP</name>
        <dbReference type="ChEBI" id="CHEBI:30616"/>
    </ligand>
</feature>
<feature type="binding site" evidence="1">
    <location>
        <position position="81"/>
    </location>
    <ligand>
        <name>ATP</name>
        <dbReference type="ChEBI" id="CHEBI:30616"/>
    </ligand>
</feature>
<feature type="binding site" evidence="1">
    <location>
        <position position="126"/>
    </location>
    <ligand>
        <name>ATP</name>
        <dbReference type="ChEBI" id="CHEBI:30616"/>
    </ligand>
</feature>
<feature type="binding site" evidence="1">
    <location>
        <position position="373"/>
    </location>
    <ligand>
        <name>ATP</name>
        <dbReference type="ChEBI" id="CHEBI:30616"/>
    </ligand>
</feature>
<evidence type="ECO:0000250" key="1"/>
<evidence type="ECO:0000256" key="2">
    <source>
        <dbReference type="SAM" id="MobiDB-lite"/>
    </source>
</evidence>
<evidence type="ECO:0000305" key="3"/>
<organism>
    <name type="scientific">Oryza sativa subsp. japonica</name>
    <name type="common">Rice</name>
    <dbReference type="NCBI Taxonomy" id="39947"/>
    <lineage>
        <taxon>Eukaryota</taxon>
        <taxon>Viridiplantae</taxon>
        <taxon>Streptophyta</taxon>
        <taxon>Embryophyta</taxon>
        <taxon>Tracheophyta</taxon>
        <taxon>Spermatophyta</taxon>
        <taxon>Magnoliopsida</taxon>
        <taxon>Liliopsida</taxon>
        <taxon>Poales</taxon>
        <taxon>Poaceae</taxon>
        <taxon>BOP clade</taxon>
        <taxon>Oryzoideae</taxon>
        <taxon>Oryzeae</taxon>
        <taxon>Oryzinae</taxon>
        <taxon>Oryza</taxon>
        <taxon>Oryza sativa</taxon>
    </lineage>
</organism>
<reference key="1">
    <citation type="journal article" date="2005" name="Nature">
        <title>The map-based sequence of the rice genome.</title>
        <authorList>
            <consortium name="International rice genome sequencing project (IRGSP)"/>
        </authorList>
    </citation>
    <scope>NUCLEOTIDE SEQUENCE [LARGE SCALE GENOMIC DNA]</scope>
    <source>
        <strain>cv. Nipponbare</strain>
    </source>
</reference>
<reference key="2">
    <citation type="journal article" date="2008" name="Nucleic Acids Res.">
        <title>The rice annotation project database (RAP-DB): 2008 update.</title>
        <authorList>
            <consortium name="The rice annotation project (RAP)"/>
        </authorList>
    </citation>
    <scope>GENOME REANNOTATION</scope>
    <source>
        <strain>cv. Nipponbare</strain>
    </source>
</reference>
<reference key="3">
    <citation type="journal article" date="2013" name="Rice">
        <title>Improvement of the Oryza sativa Nipponbare reference genome using next generation sequence and optical map data.</title>
        <authorList>
            <person name="Kawahara Y."/>
            <person name="de la Bastide M."/>
            <person name="Hamilton J.P."/>
            <person name="Kanamori H."/>
            <person name="McCombie W.R."/>
            <person name="Ouyang S."/>
            <person name="Schwartz D.C."/>
            <person name="Tanaka T."/>
            <person name="Wu J."/>
            <person name="Zhou S."/>
            <person name="Childs K.L."/>
            <person name="Davidson R.M."/>
            <person name="Lin H."/>
            <person name="Quesada-Ocampo L."/>
            <person name="Vaillancourt B."/>
            <person name="Sakai H."/>
            <person name="Lee S.S."/>
            <person name="Kim J."/>
            <person name="Numa H."/>
            <person name="Itoh T."/>
            <person name="Buell C.R."/>
            <person name="Matsumoto T."/>
        </authorList>
    </citation>
    <scope>GENOME REANNOTATION</scope>
    <source>
        <strain>cv. Nipponbare</strain>
    </source>
</reference>
<keyword id="KW-0067">ATP-binding</keyword>
<keyword id="KW-0143">Chaperone</keyword>
<keyword id="KW-0963">Cytoplasm</keyword>
<keyword id="KW-0547">Nucleotide-binding</keyword>
<keyword id="KW-1185">Reference proteome</keyword>
<keyword id="KW-0346">Stress response</keyword>
<accession>Q0J4P2</accession>
<accession>P33126</accession>
<accession>Q6ZK13</accession>
<proteinExistence type="inferred from homology"/>
<dbReference type="EMBL" id="AP003873">
    <property type="protein sequence ID" value="BAD08818.1"/>
    <property type="molecule type" value="Genomic_DNA"/>
</dbReference>
<dbReference type="EMBL" id="AP003892">
    <property type="protein sequence ID" value="BAD08897.1"/>
    <property type="molecule type" value="Genomic_DNA"/>
</dbReference>
<dbReference type="EMBL" id="AP008214">
    <property type="protein sequence ID" value="BAF24073.1"/>
    <property type="status" value="ALT_SEQ"/>
    <property type="molecule type" value="Genomic_DNA"/>
</dbReference>
<dbReference type="EMBL" id="AP014964">
    <property type="status" value="NOT_ANNOTATED_CDS"/>
    <property type="molecule type" value="Genomic_DNA"/>
</dbReference>
<dbReference type="RefSeq" id="XP_015649678.1">
    <property type="nucleotide sequence ID" value="XM_015794192.1"/>
</dbReference>
<dbReference type="SMR" id="Q0J4P2"/>
<dbReference type="FunCoup" id="Q0J4P2">
    <property type="interactions" value="2490"/>
</dbReference>
<dbReference type="STRING" id="39947.Q0J4P2"/>
<dbReference type="PaxDb" id="39947-Q0J4P2"/>
<dbReference type="KEGG" id="dosa:Os08g0500700"/>
<dbReference type="InParanoid" id="Q0J4P2"/>
<dbReference type="OrthoDB" id="988614at2759"/>
<dbReference type="Proteomes" id="UP000000763">
    <property type="component" value="Chromosome 8"/>
</dbReference>
<dbReference type="Proteomes" id="UP000059680">
    <property type="component" value="Chromosome 8"/>
</dbReference>
<dbReference type="GO" id="GO:0005829">
    <property type="term" value="C:cytosol"/>
    <property type="evidence" value="ECO:0000318"/>
    <property type="project" value="GO_Central"/>
</dbReference>
<dbReference type="GO" id="GO:0048471">
    <property type="term" value="C:perinuclear region of cytoplasm"/>
    <property type="evidence" value="ECO:0000318"/>
    <property type="project" value="GO_Central"/>
</dbReference>
<dbReference type="GO" id="GO:0005886">
    <property type="term" value="C:plasma membrane"/>
    <property type="evidence" value="ECO:0000318"/>
    <property type="project" value="GO_Central"/>
</dbReference>
<dbReference type="GO" id="GO:0032991">
    <property type="term" value="C:protein-containing complex"/>
    <property type="evidence" value="ECO:0000318"/>
    <property type="project" value="GO_Central"/>
</dbReference>
<dbReference type="GO" id="GO:0005524">
    <property type="term" value="F:ATP binding"/>
    <property type="evidence" value="ECO:0000318"/>
    <property type="project" value="GO_Central"/>
</dbReference>
<dbReference type="GO" id="GO:0016887">
    <property type="term" value="F:ATP hydrolysis activity"/>
    <property type="evidence" value="ECO:0000318"/>
    <property type="project" value="GO_Central"/>
</dbReference>
<dbReference type="GO" id="GO:0140662">
    <property type="term" value="F:ATP-dependent protein folding chaperone"/>
    <property type="evidence" value="ECO:0007669"/>
    <property type="project" value="InterPro"/>
</dbReference>
<dbReference type="GO" id="GO:0051082">
    <property type="term" value="F:unfolded protein binding"/>
    <property type="evidence" value="ECO:0000318"/>
    <property type="project" value="GO_Central"/>
</dbReference>
<dbReference type="GO" id="GO:0034605">
    <property type="term" value="P:cellular response to heat"/>
    <property type="evidence" value="ECO:0000318"/>
    <property type="project" value="GO_Central"/>
</dbReference>
<dbReference type="GO" id="GO:0006457">
    <property type="term" value="P:protein folding"/>
    <property type="evidence" value="ECO:0000318"/>
    <property type="project" value="GO_Central"/>
</dbReference>
<dbReference type="GO" id="GO:0050821">
    <property type="term" value="P:protein stabilization"/>
    <property type="evidence" value="ECO:0000318"/>
    <property type="project" value="GO_Central"/>
</dbReference>
<dbReference type="CDD" id="cd16927">
    <property type="entry name" value="HATPase_Hsp90-like"/>
    <property type="match status" value="1"/>
</dbReference>
<dbReference type="FunFam" id="3.30.565.10:FF:000012">
    <property type="entry name" value="Heat shock cognate protein"/>
    <property type="match status" value="1"/>
</dbReference>
<dbReference type="FunFam" id="1.20.120.790:FF:000001">
    <property type="entry name" value="Heat shock protein 90 alpha"/>
    <property type="match status" value="1"/>
</dbReference>
<dbReference type="FunFam" id="3.30.230.80:FF:000001">
    <property type="entry name" value="Heat shock protein 90 alpha"/>
    <property type="match status" value="1"/>
</dbReference>
<dbReference type="FunFam" id="3.40.50.11260:FF:000001">
    <property type="entry name" value="Heat shock protein 90 alpha"/>
    <property type="match status" value="1"/>
</dbReference>
<dbReference type="Gene3D" id="3.30.230.80">
    <property type="match status" value="1"/>
</dbReference>
<dbReference type="Gene3D" id="3.40.50.11260">
    <property type="match status" value="1"/>
</dbReference>
<dbReference type="Gene3D" id="1.20.120.790">
    <property type="entry name" value="Heat shock protein 90, C-terminal domain"/>
    <property type="match status" value="1"/>
</dbReference>
<dbReference type="Gene3D" id="3.30.565.10">
    <property type="entry name" value="Histidine kinase-like ATPase, C-terminal domain"/>
    <property type="match status" value="1"/>
</dbReference>
<dbReference type="HAMAP" id="MF_00505">
    <property type="entry name" value="HSP90"/>
    <property type="match status" value="1"/>
</dbReference>
<dbReference type="InterPro" id="IPR036890">
    <property type="entry name" value="HATPase_C_sf"/>
</dbReference>
<dbReference type="InterPro" id="IPR019805">
    <property type="entry name" value="Heat_shock_protein_90_CS"/>
</dbReference>
<dbReference type="InterPro" id="IPR037196">
    <property type="entry name" value="HSP90_C"/>
</dbReference>
<dbReference type="InterPro" id="IPR001404">
    <property type="entry name" value="Hsp90_fam"/>
</dbReference>
<dbReference type="InterPro" id="IPR020575">
    <property type="entry name" value="Hsp90_N"/>
</dbReference>
<dbReference type="InterPro" id="IPR020568">
    <property type="entry name" value="Ribosomal_Su5_D2-typ_SF"/>
</dbReference>
<dbReference type="NCBIfam" id="NF003555">
    <property type="entry name" value="PRK05218.1"/>
    <property type="match status" value="1"/>
</dbReference>
<dbReference type="PANTHER" id="PTHR11528">
    <property type="entry name" value="HEAT SHOCK PROTEIN 90 FAMILY MEMBER"/>
    <property type="match status" value="1"/>
</dbReference>
<dbReference type="Pfam" id="PF13589">
    <property type="entry name" value="HATPase_c_3"/>
    <property type="match status" value="1"/>
</dbReference>
<dbReference type="Pfam" id="PF00183">
    <property type="entry name" value="HSP90"/>
    <property type="match status" value="1"/>
</dbReference>
<dbReference type="PIRSF" id="PIRSF002583">
    <property type="entry name" value="Hsp90"/>
    <property type="match status" value="1"/>
</dbReference>
<dbReference type="PRINTS" id="PR00775">
    <property type="entry name" value="HEATSHOCK90"/>
</dbReference>
<dbReference type="SMART" id="SM00387">
    <property type="entry name" value="HATPase_c"/>
    <property type="match status" value="1"/>
</dbReference>
<dbReference type="SUPFAM" id="SSF55874">
    <property type="entry name" value="ATPase domain of HSP90 chaperone/DNA topoisomerase II/histidine kinase"/>
    <property type="match status" value="1"/>
</dbReference>
<dbReference type="SUPFAM" id="SSF110942">
    <property type="entry name" value="HSP90 C-terminal domain"/>
    <property type="match status" value="1"/>
</dbReference>
<dbReference type="SUPFAM" id="SSF54211">
    <property type="entry name" value="Ribosomal protein S5 domain 2-like"/>
    <property type="match status" value="1"/>
</dbReference>
<dbReference type="PROSITE" id="PS00298">
    <property type="entry name" value="HSP90"/>
    <property type="match status" value="1"/>
</dbReference>
<gene>
    <name type="primary">HSP81-1</name>
    <name type="synonym">HSP82</name>
    <name type="ordered locus">Os08g0500700</name>
    <name type="ordered locus">LOC_Os08g39140</name>
    <name type="ORF">OJ1118_A06.20-1</name>
    <name type="ORF">OJ1345_D02.4-1</name>
</gene>
<sequence length="699" mass="80194">MASETETFAFQAEINQLLSLIINTFYSNKEIFLRELISNSSDALDKIRFESLTDKSKLDAQPELFIHIVPDKASNTLSIIDSGIGMTKSDLVNNLGTIARSGTKEFMEALAAGADVSMIGQFGVGFYSAYLVAERVVVTTKHNDDEQYVWESQAGGSFTVTRDTSGEQLGRGTKITLYLKDDQLEYLEERRLKDLIKKHSEFISYPISLWTEKTTEKEISDDEDEEEKKDAEEGKVEDVDEEKEEKEKKKKKIKEVSHEWSLVNKQKPIWMRKPEEITKEEYAAFYKSLTNDWEEHLAVKHFSVEGQLEFKAVLFVPKRAPFDLFDTRKKLNNIKLYVRRVFIMDNCEELIPEWLSFVKGIVDSEDLPLNISREMLQQNKILKVIRKNLVKKCVELFFEIAENKEDYNKFYEAFSKNLKLGIHEDSTNRNKIAELLRYHSTKSGDELTSLKDYVTRMKEGQNDIYYITGESKKAVENSPFLEKLKKKGYEVLYMVDAIDEYAVGQLKEFEGKKLVSATKEGLKLDESEDEKKRKEELKEKFEGLCKVIKEVLGDKVEKVVVSDRVVDSPCCLVTGEYGWTANMERIMKAQALRDSSMAGYMSSKKTMEINPENAIMEELRKRADADKNDKSVKDLVLLLFETALLTSGFSLDDPNTFGSRIHRMLKLGLSIDEDETAEADTDMPPLEDDAGESKMEEVD</sequence>
<protein>
    <recommendedName>
        <fullName>Heat shock protein 81-1</fullName>
        <shortName>HSP81-1</shortName>
    </recommendedName>
    <alternativeName>
        <fullName>Heat shock protein 82</fullName>
    </alternativeName>
</protein>